<keyword id="KW-0238">DNA-binding</keyword>
<keyword id="KW-0597">Phosphoprotein</keyword>
<keyword id="KW-1185">Reference proteome</keyword>
<keyword id="KW-0804">Transcription</keyword>
<keyword id="KW-0805">Transcription regulation</keyword>
<keyword id="KW-0902">Two-component regulatory system</keyword>
<comment type="function">
    <text evidence="3">Member of the two-component regulatory system SenX3/RegX3 (PubMed:11101667). Specifically binds to the promoter region of the senX3-regX3 operon (PubMed:11101667).</text>
</comment>
<comment type="induction">
    <text evidence="3 4">Positively autoregulated (PubMed:11101667). Part of the senX3-regX3 operon (PubMed:9426136). The two genes are separated by a rather long intercistronic region composed of a class of duplicated sequences named mycobacterial interspersed repetitive units (MIRUs) (PubMed:9426136).</text>
</comment>
<comment type="PTM">
    <text evidence="3">Phosphorylated by SenX3.</text>
</comment>
<protein>
    <recommendedName>
        <fullName evidence="6">Sensory transduction protein RegX3</fullName>
    </recommendedName>
</protein>
<evidence type="ECO:0000255" key="1">
    <source>
        <dbReference type="PROSITE-ProRule" id="PRU00169"/>
    </source>
</evidence>
<evidence type="ECO:0000255" key="2">
    <source>
        <dbReference type="PROSITE-ProRule" id="PRU01091"/>
    </source>
</evidence>
<evidence type="ECO:0000269" key="3">
    <source>
    </source>
</evidence>
<evidence type="ECO:0000269" key="4">
    <source>
    </source>
</evidence>
<evidence type="ECO:0000303" key="5">
    <source>
    </source>
</evidence>
<evidence type="ECO:0000305" key="6"/>
<sequence>MTSVLIVEDEESLADPLAFLLRKEGFEATVVTDGPAALAEFDRAGADIVLLDLMLPGMSGTDVCKQLRARSSVPVIMVTARDSEIDKVVGLELGADDYVTKPYSARELIARIRAVLRRGGDDDSEMSDGVLESGPVRMDVERHVVSVNGDTITLPLKEFDLLEYLMRNSGRVLTRGQLIDRVWGADYVGDTKTLDVHVKRLRSKIEADPANPVHLVTVRGLGYKLEG</sequence>
<reference key="1">
    <citation type="journal article" date="1997" name="Mol. Microbiol.">
        <title>Identification of novel intergenic repetitive units in a mycobacterial two-component system operon.</title>
        <authorList>
            <person name="Supply P."/>
            <person name="Magdalena J."/>
            <person name="Himpens S."/>
            <person name="Locht C."/>
        </authorList>
    </citation>
    <scope>NUCLEOTIDE SEQUENCE [GENOMIC DNA]</scope>
    <scope>OPERON</scope>
    <source>
        <strain>BCG / Pasteur</strain>
    </source>
</reference>
<reference key="2">
    <citation type="journal article" date="2003" name="Proc. Natl. Acad. Sci. U.S.A.">
        <title>The complete genome sequence of Mycobacterium bovis.</title>
        <authorList>
            <person name="Garnier T."/>
            <person name="Eiglmeier K."/>
            <person name="Camus J.-C."/>
            <person name="Medina N."/>
            <person name="Mansoor H."/>
            <person name="Pryor M."/>
            <person name="Duthoy S."/>
            <person name="Grondin S."/>
            <person name="Lacroix C."/>
            <person name="Monsempe C."/>
            <person name="Simon S."/>
            <person name="Harris B."/>
            <person name="Atkin R."/>
            <person name="Doggett J."/>
            <person name="Mayes R."/>
            <person name="Keating L."/>
            <person name="Wheeler P.R."/>
            <person name="Parkhill J."/>
            <person name="Barrell B.G."/>
            <person name="Cole S.T."/>
            <person name="Gordon S.V."/>
            <person name="Hewinson R.G."/>
        </authorList>
    </citation>
    <scope>NUCLEOTIDE SEQUENCE [LARGE SCALE GENOMIC DNA]</scope>
    <source>
        <strain>ATCC BAA-935 / AF2122/97</strain>
    </source>
</reference>
<reference key="3">
    <citation type="journal article" date="2017" name="Genome Announc.">
        <title>Updated reference genome sequence and annotation of Mycobacterium bovis AF2122/97.</title>
        <authorList>
            <person name="Malone K.M."/>
            <person name="Farrell D."/>
            <person name="Stuber T.P."/>
            <person name="Schubert O.T."/>
            <person name="Aebersold R."/>
            <person name="Robbe-Austerman S."/>
            <person name="Gordon S.V."/>
        </authorList>
    </citation>
    <scope>NUCLEOTIDE SEQUENCE [LARGE SCALE GENOMIC DNA]</scope>
    <scope>GENOME REANNOTATION</scope>
    <source>
        <strain>ATCC BAA-935 / AF2122/97</strain>
    </source>
</reference>
<reference key="4">
    <citation type="journal article" date="2000" name="Microbiology">
        <title>Molecular characterization of the mycobacterial SenX3-RegX3 two-component system: evidence for autoregulation.</title>
        <authorList>
            <person name="Himpens S."/>
            <person name="Locht C."/>
            <person name="Supply P."/>
        </authorList>
    </citation>
    <scope>FUNCTION</scope>
    <scope>INDUCTION</scope>
    <scope>PHOSPHORYLATION AT ASP-52</scope>
    <scope>MUTAGENESIS OF ASP-52</scope>
    <source>
        <strain>BCG</strain>
    </source>
</reference>
<proteinExistence type="evidence at protein level"/>
<organism>
    <name type="scientific">Mycobacterium bovis (strain ATCC BAA-935 / AF2122/97)</name>
    <dbReference type="NCBI Taxonomy" id="233413"/>
    <lineage>
        <taxon>Bacteria</taxon>
        <taxon>Bacillati</taxon>
        <taxon>Actinomycetota</taxon>
        <taxon>Actinomycetes</taxon>
        <taxon>Mycobacteriales</taxon>
        <taxon>Mycobacteriaceae</taxon>
        <taxon>Mycobacterium</taxon>
        <taxon>Mycobacterium tuberculosis complex</taxon>
    </lineage>
</organism>
<accession>O07130</accession>
<accession>A0A1R3XVG3</accession>
<accession>X2BF91</accession>
<dbReference type="EMBL" id="Y13627">
    <property type="protein sequence ID" value="CAA73956.1"/>
    <property type="molecule type" value="Genomic_DNA"/>
</dbReference>
<dbReference type="EMBL" id="LT708304">
    <property type="protein sequence ID" value="SIT99096.1"/>
    <property type="molecule type" value="Genomic_DNA"/>
</dbReference>
<dbReference type="RefSeq" id="NP_854164.1">
    <property type="nucleotide sequence ID" value="NC_002945.3"/>
</dbReference>
<dbReference type="SMR" id="O07130"/>
<dbReference type="PATRIC" id="fig|233413.5.peg.546"/>
<dbReference type="Proteomes" id="UP000001419">
    <property type="component" value="Chromosome"/>
</dbReference>
<dbReference type="GO" id="GO:0005829">
    <property type="term" value="C:cytosol"/>
    <property type="evidence" value="ECO:0007669"/>
    <property type="project" value="TreeGrafter"/>
</dbReference>
<dbReference type="GO" id="GO:0032993">
    <property type="term" value="C:protein-DNA complex"/>
    <property type="evidence" value="ECO:0007669"/>
    <property type="project" value="TreeGrafter"/>
</dbReference>
<dbReference type="GO" id="GO:0000156">
    <property type="term" value="F:phosphorelay response regulator activity"/>
    <property type="evidence" value="ECO:0007669"/>
    <property type="project" value="TreeGrafter"/>
</dbReference>
<dbReference type="GO" id="GO:0000976">
    <property type="term" value="F:transcription cis-regulatory region binding"/>
    <property type="evidence" value="ECO:0007669"/>
    <property type="project" value="TreeGrafter"/>
</dbReference>
<dbReference type="GO" id="GO:0006355">
    <property type="term" value="P:regulation of DNA-templated transcription"/>
    <property type="evidence" value="ECO:0007669"/>
    <property type="project" value="InterPro"/>
</dbReference>
<dbReference type="CDD" id="cd17621">
    <property type="entry name" value="REC_OmpR_RegX3-like"/>
    <property type="match status" value="1"/>
</dbReference>
<dbReference type="CDD" id="cd00383">
    <property type="entry name" value="trans_reg_C"/>
    <property type="match status" value="1"/>
</dbReference>
<dbReference type="FunFam" id="3.40.50.2300:FF:000001">
    <property type="entry name" value="DNA-binding response regulator PhoB"/>
    <property type="match status" value="1"/>
</dbReference>
<dbReference type="FunFam" id="1.10.10.10:FF:000110">
    <property type="entry name" value="DNA-binding response regulator RegX3"/>
    <property type="match status" value="1"/>
</dbReference>
<dbReference type="Gene3D" id="3.40.50.2300">
    <property type="match status" value="1"/>
</dbReference>
<dbReference type="Gene3D" id="6.10.250.690">
    <property type="match status" value="1"/>
</dbReference>
<dbReference type="Gene3D" id="1.10.10.10">
    <property type="entry name" value="Winged helix-like DNA-binding domain superfamily/Winged helix DNA-binding domain"/>
    <property type="match status" value="1"/>
</dbReference>
<dbReference type="InterPro" id="IPR011006">
    <property type="entry name" value="CheY-like_superfamily"/>
</dbReference>
<dbReference type="InterPro" id="IPR001867">
    <property type="entry name" value="OmpR/PhoB-type_DNA-bd"/>
</dbReference>
<dbReference type="InterPro" id="IPR016032">
    <property type="entry name" value="Sig_transdc_resp-reg_C-effctor"/>
</dbReference>
<dbReference type="InterPro" id="IPR001789">
    <property type="entry name" value="Sig_transdc_resp-reg_receiver"/>
</dbReference>
<dbReference type="InterPro" id="IPR039420">
    <property type="entry name" value="WalR-like"/>
</dbReference>
<dbReference type="InterPro" id="IPR036388">
    <property type="entry name" value="WH-like_DNA-bd_sf"/>
</dbReference>
<dbReference type="PANTHER" id="PTHR48111">
    <property type="entry name" value="REGULATOR OF RPOS"/>
    <property type="match status" value="1"/>
</dbReference>
<dbReference type="PANTHER" id="PTHR48111:SF72">
    <property type="entry name" value="SENSORY TRANSDUCTION PROTEIN REGX3"/>
    <property type="match status" value="1"/>
</dbReference>
<dbReference type="Pfam" id="PF00072">
    <property type="entry name" value="Response_reg"/>
    <property type="match status" value="1"/>
</dbReference>
<dbReference type="Pfam" id="PF00486">
    <property type="entry name" value="Trans_reg_C"/>
    <property type="match status" value="1"/>
</dbReference>
<dbReference type="SMART" id="SM00448">
    <property type="entry name" value="REC"/>
    <property type="match status" value="1"/>
</dbReference>
<dbReference type="SMART" id="SM00862">
    <property type="entry name" value="Trans_reg_C"/>
    <property type="match status" value="1"/>
</dbReference>
<dbReference type="SUPFAM" id="SSF46894">
    <property type="entry name" value="C-terminal effector domain of the bipartite response regulators"/>
    <property type="match status" value="1"/>
</dbReference>
<dbReference type="SUPFAM" id="SSF52172">
    <property type="entry name" value="CheY-like"/>
    <property type="match status" value="1"/>
</dbReference>
<dbReference type="PROSITE" id="PS51755">
    <property type="entry name" value="OMPR_PHOB"/>
    <property type="match status" value="1"/>
</dbReference>
<dbReference type="PROSITE" id="PS50110">
    <property type="entry name" value="RESPONSE_REGULATORY"/>
    <property type="match status" value="1"/>
</dbReference>
<name>REGX3_MYCBO</name>
<feature type="chain" id="PRO_0000081331" description="Sensory transduction protein RegX3">
    <location>
        <begin position="1"/>
        <end position="227"/>
    </location>
</feature>
<feature type="domain" description="Response regulatory" evidence="1">
    <location>
        <begin position="3"/>
        <end position="116"/>
    </location>
</feature>
<feature type="DNA-binding region" description="OmpR/PhoB-type" evidence="2">
    <location>
        <begin position="128"/>
        <end position="227"/>
    </location>
</feature>
<feature type="modified residue" description="4-aspartylphosphate" evidence="1 3">
    <location>
        <position position="52"/>
    </location>
</feature>
<feature type="mutagenesis site" description="Lack of phosphorylation." evidence="3">
    <original>D</original>
    <variation>N</variation>
    <location>
        <position position="52"/>
    </location>
</feature>
<feature type="sequence conflict" description="In Ref. 1; CAA73956." evidence="6" ref="1">
    <original>A</original>
    <variation>T</variation>
    <location>
        <position position="18"/>
    </location>
</feature>
<gene>
    <name evidence="5" type="primary">regX3</name>
    <name type="ordered locus">BQ2027_MB0501</name>
</gene>